<keyword id="KW-0687">Ribonucleoprotein</keyword>
<keyword id="KW-0689">Ribosomal protein</keyword>
<keyword id="KW-0694">RNA-binding</keyword>
<keyword id="KW-0699">rRNA-binding</keyword>
<feature type="chain" id="PRO_0000132700" description="Small ribosomal subunit protein uS4">
    <location>
        <begin position="1"/>
        <end position="190"/>
    </location>
</feature>
<feature type="domain" description="S4 RNA-binding" evidence="1">
    <location>
        <begin position="105"/>
        <end position="181"/>
    </location>
</feature>
<feature type="region of interest" description="Disordered" evidence="2">
    <location>
        <begin position="163"/>
        <end position="190"/>
    </location>
</feature>
<feature type="compositionally biased region" description="Acidic residues" evidence="2">
    <location>
        <begin position="181"/>
        <end position="190"/>
    </location>
</feature>
<evidence type="ECO:0000255" key="1">
    <source>
        <dbReference type="PROSITE-ProRule" id="PRU00182"/>
    </source>
</evidence>
<evidence type="ECO:0000256" key="2">
    <source>
        <dbReference type="SAM" id="MobiDB-lite"/>
    </source>
</evidence>
<evidence type="ECO:0000305" key="3"/>
<sequence length="190" mass="21775">MAPRSYSKTAKVPRRPFEAARLDSELKLVGEYGLRNKREVWRVLLTLSKIRRAARELLTLDEKDPKRLFEGNALIRRLVRVGVLDESRMKLDYVLALKAEDFLERRLQTLVYKLGLAKSIHHARVLIRQRHIRVGKQIVNVPSFVVRLDSQKHIDFALTSPFGGGRPGRVRRKKAKAAEGGDGDAEEDEE</sequence>
<gene>
    <name type="primary">RPS9</name>
    <name type="synonym">SU12</name>
</gene>
<dbReference type="EMBL" id="X96613">
    <property type="protein sequence ID" value="CAA65433.1"/>
    <property type="molecule type" value="Genomic_DNA"/>
</dbReference>
<dbReference type="SMR" id="P52810"/>
<dbReference type="VEuPathDB" id="FungiDB:PODANS_1_20670"/>
<dbReference type="GO" id="GO:0022627">
    <property type="term" value="C:cytosolic small ribosomal subunit"/>
    <property type="evidence" value="ECO:0007669"/>
    <property type="project" value="TreeGrafter"/>
</dbReference>
<dbReference type="GO" id="GO:0019843">
    <property type="term" value="F:rRNA binding"/>
    <property type="evidence" value="ECO:0007669"/>
    <property type="project" value="UniProtKB-KW"/>
</dbReference>
<dbReference type="GO" id="GO:0003735">
    <property type="term" value="F:structural constituent of ribosome"/>
    <property type="evidence" value="ECO:0007669"/>
    <property type="project" value="InterPro"/>
</dbReference>
<dbReference type="GO" id="GO:0042274">
    <property type="term" value="P:ribosomal small subunit biogenesis"/>
    <property type="evidence" value="ECO:0007669"/>
    <property type="project" value="TreeGrafter"/>
</dbReference>
<dbReference type="GO" id="GO:0006412">
    <property type="term" value="P:translation"/>
    <property type="evidence" value="ECO:0007669"/>
    <property type="project" value="InterPro"/>
</dbReference>
<dbReference type="CDD" id="cd00165">
    <property type="entry name" value="S4"/>
    <property type="match status" value="1"/>
</dbReference>
<dbReference type="FunFam" id="3.10.290.10:FF:000021">
    <property type="entry name" value="40S ribosomal protein S9"/>
    <property type="match status" value="1"/>
</dbReference>
<dbReference type="Gene3D" id="3.10.290.10">
    <property type="entry name" value="RNA-binding S4 domain"/>
    <property type="match status" value="1"/>
</dbReference>
<dbReference type="InterPro" id="IPR022801">
    <property type="entry name" value="Ribosomal_uS4"/>
</dbReference>
<dbReference type="InterPro" id="IPR018079">
    <property type="entry name" value="Ribosomal_uS4_CS"/>
</dbReference>
<dbReference type="InterPro" id="IPR005710">
    <property type="entry name" value="Ribosomal_uS4_euk/arc"/>
</dbReference>
<dbReference type="InterPro" id="IPR001912">
    <property type="entry name" value="Ribosomal_uS4_N"/>
</dbReference>
<dbReference type="InterPro" id="IPR002942">
    <property type="entry name" value="S4_RNA-bd"/>
</dbReference>
<dbReference type="InterPro" id="IPR036986">
    <property type="entry name" value="S4_RNA-bd_sf"/>
</dbReference>
<dbReference type="NCBIfam" id="NF003139">
    <property type="entry name" value="PRK04051.1"/>
    <property type="match status" value="1"/>
</dbReference>
<dbReference type="NCBIfam" id="TIGR01018">
    <property type="entry name" value="uS4_arch"/>
    <property type="match status" value="1"/>
</dbReference>
<dbReference type="PANTHER" id="PTHR11831">
    <property type="entry name" value="30S 40S RIBOSOMAL PROTEIN"/>
    <property type="match status" value="1"/>
</dbReference>
<dbReference type="PANTHER" id="PTHR11831:SF5">
    <property type="entry name" value="40S RIBOSOMAL PROTEIN S9"/>
    <property type="match status" value="1"/>
</dbReference>
<dbReference type="Pfam" id="PF00163">
    <property type="entry name" value="Ribosomal_S4"/>
    <property type="match status" value="1"/>
</dbReference>
<dbReference type="Pfam" id="PF01479">
    <property type="entry name" value="S4"/>
    <property type="match status" value="1"/>
</dbReference>
<dbReference type="SMART" id="SM01390">
    <property type="entry name" value="Ribosomal_S4"/>
    <property type="match status" value="1"/>
</dbReference>
<dbReference type="SMART" id="SM00363">
    <property type="entry name" value="S4"/>
    <property type="match status" value="1"/>
</dbReference>
<dbReference type="SUPFAM" id="SSF55174">
    <property type="entry name" value="Alpha-L RNA-binding motif"/>
    <property type="match status" value="1"/>
</dbReference>
<dbReference type="PROSITE" id="PS00632">
    <property type="entry name" value="RIBOSOMAL_S4"/>
    <property type="match status" value="1"/>
</dbReference>
<dbReference type="PROSITE" id="PS50889">
    <property type="entry name" value="S4"/>
    <property type="match status" value="1"/>
</dbReference>
<name>RS9_PODAS</name>
<accession>P52810</accession>
<proteinExistence type="inferred from homology"/>
<organism>
    <name type="scientific">Podospora anserina</name>
    <name type="common">Pleurage anserina</name>
    <dbReference type="NCBI Taxonomy" id="2587412"/>
    <lineage>
        <taxon>Eukaryota</taxon>
        <taxon>Fungi</taxon>
        <taxon>Dikarya</taxon>
        <taxon>Ascomycota</taxon>
        <taxon>Pezizomycotina</taxon>
        <taxon>Sordariomycetes</taxon>
        <taxon>Sordariomycetidae</taxon>
        <taxon>Sordariales</taxon>
        <taxon>Podosporaceae</taxon>
        <taxon>Podospora</taxon>
    </lineage>
</organism>
<comment type="similarity">
    <text evidence="3">Belongs to the universal ribosomal protein uS4 family.</text>
</comment>
<protein>
    <recommendedName>
        <fullName evidence="3">Small ribosomal subunit protein uS4</fullName>
    </recommendedName>
    <alternativeName>
        <fullName>40S ribosomal protein S9</fullName>
    </alternativeName>
    <alternativeName>
        <fullName>S7</fullName>
    </alternativeName>
</protein>
<reference key="1">
    <citation type="journal article" date="1997" name="Genetics">
        <title>Cytosolic ribosomal mutations that abolish accumulation of circular intron in the mitochondria without preventing senescence of Podospora anserina.</title>
        <authorList>
            <person name="Silar P."/>
            <person name="Koll F."/>
            <person name="Rossignol M."/>
        </authorList>
    </citation>
    <scope>NUCLEOTIDE SEQUENCE [GENOMIC DNA]</scope>
    <source>
        <strain>s</strain>
    </source>
</reference>